<accession>P09469</accession>
<evidence type="ECO:0000250" key="1"/>
<evidence type="ECO:0000305" key="2"/>
<reference key="1">
    <citation type="journal article" date="1988" name="J. Biol. Chem.">
        <title>The cDNA sequence of the 69-kDa subunit of the carrot vacuolar H+-ATPase. Homology to the beta-chain of F0F1-ATPases.</title>
        <authorList>
            <person name="Zimniak L."/>
            <person name="Dittrich R."/>
            <person name="Gogarten J.P."/>
            <person name="Kibak H."/>
            <person name="Taiz L."/>
        </authorList>
    </citation>
    <scope>NUCLEOTIDE SEQUENCE [MRNA]</scope>
</reference>
<reference key="2">
    <citation type="journal article" date="1990" name="J. Biol. Chem.">
        <title>Structure and function of the promoter of the carrot V-type H(+)-ATPase catalytic subunit gene.</title>
        <authorList>
            <person name="Struve I."/>
            <person name="Rausch T."/>
            <person name="Bernasconi P."/>
            <person name="Taiz L."/>
        </authorList>
    </citation>
    <scope>NUCLEOTIDE SEQUENCE [GENOMIC DNA] OF 1-68</scope>
</reference>
<proteinExistence type="evidence at transcript level"/>
<feature type="chain" id="PRO_0000144579" description="V-type proton ATPase catalytic subunit A">
    <location>
        <begin position="1"/>
        <end position="623"/>
    </location>
</feature>
<feature type="binding site" evidence="1">
    <location>
        <begin position="252"/>
        <end position="259"/>
    </location>
    <ligand>
        <name>ATP</name>
        <dbReference type="ChEBI" id="CHEBI:30616"/>
    </ligand>
</feature>
<feature type="sequence conflict" description="In Ref. 2; AAA33135." evidence="2" ref="2">
    <original>A</original>
    <variation>S</variation>
    <location>
        <position position="40"/>
    </location>
</feature>
<name>VATA_DAUCA</name>
<protein>
    <recommendedName>
        <fullName>V-type proton ATPase catalytic subunit A</fullName>
        <shortName>V-ATPase subunit A</shortName>
        <ecNumber>7.1.2.2</ecNumber>
    </recommendedName>
    <alternativeName>
        <fullName>V-ATPase 69 kDa subunit</fullName>
    </alternativeName>
    <alternativeName>
        <fullName>Vacuolar proton pump subunit alpha</fullName>
    </alternativeName>
</protein>
<dbReference type="EC" id="7.1.2.2"/>
<dbReference type="EMBL" id="J03769">
    <property type="protein sequence ID" value="AAA33139.1"/>
    <property type="molecule type" value="mRNA"/>
</dbReference>
<dbReference type="EMBL" id="J05429">
    <property type="protein sequence ID" value="AAA33135.1"/>
    <property type="molecule type" value="Genomic_DNA"/>
</dbReference>
<dbReference type="PIR" id="A28105">
    <property type="entry name" value="PXPZV9"/>
</dbReference>
<dbReference type="SMR" id="P09469"/>
<dbReference type="GO" id="GO:0000325">
    <property type="term" value="C:plant-type vacuole"/>
    <property type="evidence" value="ECO:0007669"/>
    <property type="project" value="TreeGrafter"/>
</dbReference>
<dbReference type="GO" id="GO:0033180">
    <property type="term" value="C:proton-transporting V-type ATPase, V1 domain"/>
    <property type="evidence" value="ECO:0007669"/>
    <property type="project" value="InterPro"/>
</dbReference>
<dbReference type="GO" id="GO:0005524">
    <property type="term" value="F:ATP binding"/>
    <property type="evidence" value="ECO:0007669"/>
    <property type="project" value="UniProtKB-KW"/>
</dbReference>
<dbReference type="GO" id="GO:0016887">
    <property type="term" value="F:ATP hydrolysis activity"/>
    <property type="evidence" value="ECO:0007669"/>
    <property type="project" value="InterPro"/>
</dbReference>
<dbReference type="GO" id="GO:0046961">
    <property type="term" value="F:proton-transporting ATPase activity, rotational mechanism"/>
    <property type="evidence" value="ECO:0007669"/>
    <property type="project" value="InterPro"/>
</dbReference>
<dbReference type="GO" id="GO:0046034">
    <property type="term" value="P:ATP metabolic process"/>
    <property type="evidence" value="ECO:0007669"/>
    <property type="project" value="InterPro"/>
</dbReference>
<dbReference type="CDD" id="cd18111">
    <property type="entry name" value="ATP-synt_V_A-type_alpha_C"/>
    <property type="match status" value="1"/>
</dbReference>
<dbReference type="CDD" id="cd18119">
    <property type="entry name" value="ATP-synt_V_A-type_alpha_N"/>
    <property type="match status" value="1"/>
</dbReference>
<dbReference type="CDD" id="cd01134">
    <property type="entry name" value="V_A-ATPase_A"/>
    <property type="match status" value="1"/>
</dbReference>
<dbReference type="FunFam" id="1.10.1140.10:FF:000002">
    <property type="entry name" value="V-type proton ATPase catalytic subunit A"/>
    <property type="match status" value="1"/>
</dbReference>
<dbReference type="FunFam" id="2.40.30.20:FF:000002">
    <property type="entry name" value="V-type proton ATPase catalytic subunit A"/>
    <property type="match status" value="1"/>
</dbReference>
<dbReference type="FunFam" id="2.40.50.100:FF:000008">
    <property type="entry name" value="V-type proton ATPase catalytic subunit A"/>
    <property type="match status" value="1"/>
</dbReference>
<dbReference type="FunFam" id="3.40.50.300:FF:000052">
    <property type="entry name" value="V-type proton ATPase catalytic subunit A"/>
    <property type="match status" value="1"/>
</dbReference>
<dbReference type="Gene3D" id="2.40.30.20">
    <property type="match status" value="1"/>
</dbReference>
<dbReference type="Gene3D" id="2.40.50.100">
    <property type="match status" value="1"/>
</dbReference>
<dbReference type="Gene3D" id="1.10.1140.10">
    <property type="entry name" value="Bovine Mitochondrial F1-atpase, Atp Synthase Beta Chain, Chain D, domain 3"/>
    <property type="match status" value="1"/>
</dbReference>
<dbReference type="Gene3D" id="3.40.50.300">
    <property type="entry name" value="P-loop containing nucleotide triphosphate hydrolases"/>
    <property type="match status" value="1"/>
</dbReference>
<dbReference type="HAMAP" id="MF_00309">
    <property type="entry name" value="ATP_synth_A_arch"/>
    <property type="match status" value="1"/>
</dbReference>
<dbReference type="InterPro" id="IPR055190">
    <property type="entry name" value="ATP-synt_VA_C"/>
</dbReference>
<dbReference type="InterPro" id="IPR031686">
    <property type="entry name" value="ATP-synth_a_Xtn"/>
</dbReference>
<dbReference type="InterPro" id="IPR023366">
    <property type="entry name" value="ATP_synth_asu-like_sf"/>
</dbReference>
<dbReference type="InterPro" id="IPR020003">
    <property type="entry name" value="ATPase_a/bsu_AS"/>
</dbReference>
<dbReference type="InterPro" id="IPR004100">
    <property type="entry name" value="ATPase_F1/V1/A1_a/bsu_N"/>
</dbReference>
<dbReference type="InterPro" id="IPR036121">
    <property type="entry name" value="ATPase_F1/V1/A1_a/bsu_N_sf"/>
</dbReference>
<dbReference type="InterPro" id="IPR000194">
    <property type="entry name" value="ATPase_F1/V1/A1_a/bsu_nucl-bd"/>
</dbReference>
<dbReference type="InterPro" id="IPR024034">
    <property type="entry name" value="ATPase_F1/V1_b/a_C"/>
</dbReference>
<dbReference type="InterPro" id="IPR005725">
    <property type="entry name" value="ATPase_V1-cplx_asu"/>
</dbReference>
<dbReference type="InterPro" id="IPR027417">
    <property type="entry name" value="P-loop_NTPase"/>
</dbReference>
<dbReference type="InterPro" id="IPR022878">
    <property type="entry name" value="V-ATPase_asu"/>
</dbReference>
<dbReference type="NCBIfam" id="NF003220">
    <property type="entry name" value="PRK04192.1"/>
    <property type="match status" value="1"/>
</dbReference>
<dbReference type="NCBIfam" id="TIGR01042">
    <property type="entry name" value="V-ATPase_V1_A"/>
    <property type="match status" value="1"/>
</dbReference>
<dbReference type="PANTHER" id="PTHR43607:SF1">
    <property type="entry name" value="H(+)-TRANSPORTING TWO-SECTOR ATPASE"/>
    <property type="match status" value="1"/>
</dbReference>
<dbReference type="PANTHER" id="PTHR43607">
    <property type="entry name" value="V-TYPE PROTON ATPASE CATALYTIC SUBUNIT A"/>
    <property type="match status" value="1"/>
</dbReference>
<dbReference type="Pfam" id="PF00006">
    <property type="entry name" value="ATP-synt_ab"/>
    <property type="match status" value="1"/>
</dbReference>
<dbReference type="Pfam" id="PF02874">
    <property type="entry name" value="ATP-synt_ab_N"/>
    <property type="match status" value="1"/>
</dbReference>
<dbReference type="Pfam" id="PF16886">
    <property type="entry name" value="ATP-synt_ab_Xtn"/>
    <property type="match status" value="1"/>
</dbReference>
<dbReference type="Pfam" id="PF22919">
    <property type="entry name" value="ATP-synt_VA_C"/>
    <property type="match status" value="1"/>
</dbReference>
<dbReference type="SUPFAM" id="SSF47917">
    <property type="entry name" value="C-terminal domain of alpha and beta subunits of F1 ATP synthase"/>
    <property type="match status" value="1"/>
</dbReference>
<dbReference type="SUPFAM" id="SSF50615">
    <property type="entry name" value="N-terminal domain of alpha and beta subunits of F1 ATP synthase"/>
    <property type="match status" value="1"/>
</dbReference>
<dbReference type="SUPFAM" id="SSF52540">
    <property type="entry name" value="P-loop containing nucleoside triphosphate hydrolases"/>
    <property type="match status" value="1"/>
</dbReference>
<dbReference type="PROSITE" id="PS00152">
    <property type="entry name" value="ATPASE_ALPHA_BETA"/>
    <property type="match status" value="1"/>
</dbReference>
<comment type="function">
    <text>Catalytic subunit of the peripheral V1 complex of vacuolar ATPase. V-ATPase vacuolar ATPase is responsible for acidifying a variety of intracellular compartments in eukaryotic cells.</text>
</comment>
<comment type="catalytic activity">
    <reaction>
        <text>ATP + H2O + 4 H(+)(in) = ADP + phosphate + 5 H(+)(out)</text>
        <dbReference type="Rhea" id="RHEA:57720"/>
        <dbReference type="ChEBI" id="CHEBI:15377"/>
        <dbReference type="ChEBI" id="CHEBI:15378"/>
        <dbReference type="ChEBI" id="CHEBI:30616"/>
        <dbReference type="ChEBI" id="CHEBI:43474"/>
        <dbReference type="ChEBI" id="CHEBI:456216"/>
        <dbReference type="EC" id="7.1.2.2"/>
    </reaction>
</comment>
<comment type="subunit">
    <text>V-ATPase is a heteromultimeric enzyme composed of a peripheral catalytic V1 complex (main components: subunits A, B, C, D, E, and F) attached to an integral membrane V0 proton pore complex (main component: the proteolipid protein).</text>
</comment>
<comment type="similarity">
    <text evidence="2">Belongs to the ATPase alpha/beta chains family.</text>
</comment>
<keyword id="KW-0067">ATP-binding</keyword>
<keyword id="KW-0375">Hydrogen ion transport</keyword>
<keyword id="KW-0406">Ion transport</keyword>
<keyword id="KW-0547">Nucleotide-binding</keyword>
<keyword id="KW-1278">Translocase</keyword>
<keyword id="KW-0813">Transport</keyword>
<organism>
    <name type="scientific">Daucus carota</name>
    <name type="common">Wild carrot</name>
    <dbReference type="NCBI Taxonomy" id="4039"/>
    <lineage>
        <taxon>Eukaryota</taxon>
        <taxon>Viridiplantae</taxon>
        <taxon>Streptophyta</taxon>
        <taxon>Embryophyta</taxon>
        <taxon>Tracheophyta</taxon>
        <taxon>Spermatophyta</taxon>
        <taxon>Magnoliopsida</taxon>
        <taxon>eudicotyledons</taxon>
        <taxon>Gunneridae</taxon>
        <taxon>Pentapetalae</taxon>
        <taxon>asterids</taxon>
        <taxon>campanulids</taxon>
        <taxon>Apiales</taxon>
        <taxon>Apiaceae</taxon>
        <taxon>Apioideae</taxon>
        <taxon>Scandiceae</taxon>
        <taxon>Daucinae</taxon>
        <taxon>Daucus</taxon>
        <taxon>Daucus sect. Daucus</taxon>
    </lineage>
</organism>
<sequence length="623" mass="68835">MPSVYGDRLTTFEDSEKESEYGYVRKVSGPVVVADGMGGAAMYELVRVGHDNLIGEIIRLEGDSATIQVYEETAGLMVNDPVLRTHKPLSVELGPGILGNIFDGIQRPLKTIAKRSGDVYIPRGVSVPALDKDTLWEFQPKKIGEGDLLTGGDLYATVFENSLMQHHVALPPDAMGKITYVAPAGQYSLKDTVLELEFQGVKKQFTMLQTWPVRTPRPVASKLAADTPLLTGQRVLDALFPSVLGGTCAIPGAFGCGKTVISQALSKYSNSDTVVYVGCGERGNEMAEVLMDFPQLTMTLPDGREESVMKRTTLVANTSNMPVAAREASIYTGITIAEYFRDMGYNVSMMADSTSRWAEALREISGRLAEMPADSGYPAYLAARLASFYERAGKVKCLGGPERNGSVTIVGAVSPPGGDFSDPVTSATLSIVQVFWGLDKKLAQRKHFPSVNWLISYSKYSTALESFYEKFDSDFIDIRTKAREVLQREDDLNEIVQLVGKDALAETDKITLETAKLLREDYLAQNAFTPYDKFCPFYKSVWMMRNIIHFYNLANQAVERGAGMDGQKISYTLIKHRLGDLFYRLVSQKFEDPAEGEDVLVGKFKKLHDDLTSGFRNLEDETR</sequence>